<keyword id="KW-1185">Reference proteome</keyword>
<proteinExistence type="evidence at transcript level"/>
<reference key="1">
    <citation type="journal article" date="2005" name="Nature">
        <title>The genome of the social amoeba Dictyostelium discoideum.</title>
        <authorList>
            <person name="Eichinger L."/>
            <person name="Pachebat J.A."/>
            <person name="Gloeckner G."/>
            <person name="Rajandream M.A."/>
            <person name="Sucgang R."/>
            <person name="Berriman M."/>
            <person name="Song J."/>
            <person name="Olsen R."/>
            <person name="Szafranski K."/>
            <person name="Xu Q."/>
            <person name="Tunggal B."/>
            <person name="Kummerfeld S."/>
            <person name="Madera M."/>
            <person name="Konfortov B.A."/>
            <person name="Rivero F."/>
            <person name="Bankier A.T."/>
            <person name="Lehmann R."/>
            <person name="Hamlin N."/>
            <person name="Davies R."/>
            <person name="Gaudet P."/>
            <person name="Fey P."/>
            <person name="Pilcher K."/>
            <person name="Chen G."/>
            <person name="Saunders D."/>
            <person name="Sodergren E.J."/>
            <person name="Davis P."/>
            <person name="Kerhornou A."/>
            <person name="Nie X."/>
            <person name="Hall N."/>
            <person name="Anjard C."/>
            <person name="Hemphill L."/>
            <person name="Bason N."/>
            <person name="Farbrother P."/>
            <person name="Desany B."/>
            <person name="Just E."/>
            <person name="Morio T."/>
            <person name="Rost R."/>
            <person name="Churcher C.M."/>
            <person name="Cooper J."/>
            <person name="Haydock S."/>
            <person name="van Driessche N."/>
            <person name="Cronin A."/>
            <person name="Goodhead I."/>
            <person name="Muzny D.M."/>
            <person name="Mourier T."/>
            <person name="Pain A."/>
            <person name="Lu M."/>
            <person name="Harper D."/>
            <person name="Lindsay R."/>
            <person name="Hauser H."/>
            <person name="James K.D."/>
            <person name="Quiles M."/>
            <person name="Madan Babu M."/>
            <person name="Saito T."/>
            <person name="Buchrieser C."/>
            <person name="Wardroper A."/>
            <person name="Felder M."/>
            <person name="Thangavelu M."/>
            <person name="Johnson D."/>
            <person name="Knights A."/>
            <person name="Loulseged H."/>
            <person name="Mungall K.L."/>
            <person name="Oliver K."/>
            <person name="Price C."/>
            <person name="Quail M.A."/>
            <person name="Urushihara H."/>
            <person name="Hernandez J."/>
            <person name="Rabbinowitsch E."/>
            <person name="Steffen D."/>
            <person name="Sanders M."/>
            <person name="Ma J."/>
            <person name="Kohara Y."/>
            <person name="Sharp S."/>
            <person name="Simmonds M.N."/>
            <person name="Spiegler S."/>
            <person name="Tivey A."/>
            <person name="Sugano S."/>
            <person name="White B."/>
            <person name="Walker D."/>
            <person name="Woodward J.R."/>
            <person name="Winckler T."/>
            <person name="Tanaka Y."/>
            <person name="Shaulsky G."/>
            <person name="Schleicher M."/>
            <person name="Weinstock G.M."/>
            <person name="Rosenthal A."/>
            <person name="Cox E.C."/>
            <person name="Chisholm R.L."/>
            <person name="Gibbs R.A."/>
            <person name="Loomis W.F."/>
            <person name="Platzer M."/>
            <person name="Kay R.R."/>
            <person name="Williams J.G."/>
            <person name="Dear P.H."/>
            <person name="Noegel A.A."/>
            <person name="Barrell B.G."/>
            <person name="Kuspa A."/>
        </authorList>
    </citation>
    <scope>NUCLEOTIDE SEQUENCE [LARGE SCALE GENOMIC DNA]</scope>
    <source>
        <strain>AX4</strain>
    </source>
</reference>
<reference key="2">
    <citation type="journal article" date="2006" name="Differentiation">
        <title>Trishanku, a novel regulator of cell-type stability and morphogenesis in Dictyostelium discoideum.</title>
        <authorList>
            <person name="Jaiswal J.K."/>
            <person name="Mujumdar N."/>
            <person name="Macwilliams H.K."/>
            <person name="Nanjundiah V."/>
        </authorList>
    </citation>
    <scope>FUNCTION</scope>
    <scope>DEVELOPMENTAL STAGE</scope>
    <scope>DISRUPTION PHENOTYPE</scope>
    <scope>TISSUE SPECIFICITY</scope>
</reference>
<reference key="3">
    <citation type="journal article" date="2009" name="Evol. Dev.">
        <title>The trishanku gene and terminal morphogenesis in Dictyostelium discoideum.</title>
        <authorList>
            <person name="Mujumdar N."/>
            <person name="Inouye K."/>
            <person name="Nanjundiah V."/>
        </authorList>
    </citation>
    <scope>FUNCTION</scope>
    <scope>DISRUPTION PHENOTYPE</scope>
    <scope>TISSUE SPECIFICITY</scope>
</reference>
<gene>
    <name type="primary">triA</name>
    <name type="ORF">DDB_G0292436</name>
</gene>
<accession>Q54D84</accession>
<evidence type="ECO:0000255" key="1">
    <source>
        <dbReference type="PROSITE-ProRule" id="PRU00037"/>
    </source>
</evidence>
<evidence type="ECO:0000256" key="2">
    <source>
        <dbReference type="SAM" id="MobiDB-lite"/>
    </source>
</evidence>
<evidence type="ECO:0000269" key="3">
    <source>
    </source>
</evidence>
<evidence type="ECO:0000269" key="4">
    <source>
    </source>
</evidence>
<dbReference type="EMBL" id="AAFI02000190">
    <property type="protein sequence ID" value="EAL61197.1"/>
    <property type="molecule type" value="Genomic_DNA"/>
</dbReference>
<dbReference type="RefSeq" id="XP_629612.1">
    <property type="nucleotide sequence ID" value="XM_629610.1"/>
</dbReference>
<dbReference type="SMR" id="Q54D84"/>
<dbReference type="FunCoup" id="Q54D84">
    <property type="interactions" value="368"/>
</dbReference>
<dbReference type="STRING" id="44689.Q54D84"/>
<dbReference type="PaxDb" id="44689-DDB0234260"/>
<dbReference type="EnsemblProtists" id="EAL61197">
    <property type="protein sequence ID" value="EAL61197"/>
    <property type="gene ID" value="DDB_G0292436"/>
</dbReference>
<dbReference type="GeneID" id="8628675"/>
<dbReference type="KEGG" id="ddi:DDB_G0292436"/>
<dbReference type="dictyBase" id="DDB_G0292436">
    <property type="gene designation" value="triA"/>
</dbReference>
<dbReference type="VEuPathDB" id="AmoebaDB:DDB_G0292436"/>
<dbReference type="eggNOG" id="KOG4350">
    <property type="taxonomic scope" value="Eukaryota"/>
</dbReference>
<dbReference type="HOGENOM" id="CLU_395598_0_0_1"/>
<dbReference type="InParanoid" id="Q54D84"/>
<dbReference type="OMA" id="WENMNIG"/>
<dbReference type="Reactome" id="R-DDI-114608">
    <property type="pathway name" value="Platelet degranulation"/>
</dbReference>
<dbReference type="Reactome" id="R-DDI-8951664">
    <property type="pathway name" value="Neddylation"/>
</dbReference>
<dbReference type="Reactome" id="R-DDI-983168">
    <property type="pathway name" value="Antigen processing: Ubiquitination &amp; Proteasome degradation"/>
</dbReference>
<dbReference type="PRO" id="PR:Q54D84"/>
<dbReference type="Proteomes" id="UP000002195">
    <property type="component" value="Chromosome 6"/>
</dbReference>
<dbReference type="GO" id="GO:0031152">
    <property type="term" value="P:aggregation involved in sorocarp development"/>
    <property type="evidence" value="ECO:0000315"/>
    <property type="project" value="dictyBase"/>
</dbReference>
<dbReference type="GO" id="GO:0016338">
    <property type="term" value="P:calcium-independent cell-cell adhesion via plasma membrane cell-adhesion molecules"/>
    <property type="evidence" value="ECO:0000315"/>
    <property type="project" value="dictyBase"/>
</dbReference>
<dbReference type="GO" id="GO:0045165">
    <property type="term" value="P:cell fate commitment"/>
    <property type="evidence" value="ECO:0000315"/>
    <property type="project" value="dictyBase"/>
</dbReference>
<dbReference type="GO" id="GO:0001709">
    <property type="term" value="P:cell fate determination"/>
    <property type="evidence" value="ECO:0000315"/>
    <property type="project" value="dictyBase"/>
</dbReference>
<dbReference type="GO" id="GO:0031154">
    <property type="term" value="P:culmination involved in sorocarp development"/>
    <property type="evidence" value="ECO:0000315"/>
    <property type="project" value="dictyBase"/>
</dbReference>
<dbReference type="GO" id="GO:0030435">
    <property type="term" value="P:sporulation resulting in formation of a cellular spore"/>
    <property type="evidence" value="ECO:0000315"/>
    <property type="project" value="dictyBase"/>
</dbReference>
<dbReference type="CDD" id="cd18314">
    <property type="entry name" value="BTB_POZ_trishanku-like"/>
    <property type="match status" value="1"/>
</dbReference>
<dbReference type="CDD" id="cd00121">
    <property type="entry name" value="MATH"/>
    <property type="match status" value="1"/>
</dbReference>
<dbReference type="FunFam" id="3.30.710.10:FF:000390">
    <property type="entry name" value="AGAP000475-PA"/>
    <property type="match status" value="1"/>
</dbReference>
<dbReference type="Gene3D" id="3.30.710.10">
    <property type="entry name" value="Potassium Channel Kv1.1, Chain A"/>
    <property type="match status" value="1"/>
</dbReference>
<dbReference type="InterPro" id="IPR011705">
    <property type="entry name" value="BACK"/>
</dbReference>
<dbReference type="InterPro" id="IPR000210">
    <property type="entry name" value="BTB/POZ_dom"/>
</dbReference>
<dbReference type="InterPro" id="IPR002083">
    <property type="entry name" value="MATH/TRAF_dom"/>
</dbReference>
<dbReference type="InterPro" id="IPR011333">
    <property type="entry name" value="SKP1/BTB/POZ_sf"/>
</dbReference>
<dbReference type="PANTHER" id="PTHR36911:SF1">
    <property type="entry name" value="LIM ZINC-BINDING DOMAIN-CONTAINING PROTEIN"/>
    <property type="match status" value="1"/>
</dbReference>
<dbReference type="PANTHER" id="PTHR36911">
    <property type="entry name" value="LIM ZINC-BINDING DOMAIN-CONTAINING PROTEIN-RELATED"/>
    <property type="match status" value="1"/>
</dbReference>
<dbReference type="Pfam" id="PF07707">
    <property type="entry name" value="BACK"/>
    <property type="match status" value="1"/>
</dbReference>
<dbReference type="Pfam" id="PF00651">
    <property type="entry name" value="BTB"/>
    <property type="match status" value="1"/>
</dbReference>
<dbReference type="SMART" id="SM00225">
    <property type="entry name" value="BTB"/>
    <property type="match status" value="1"/>
</dbReference>
<dbReference type="SUPFAM" id="SSF54695">
    <property type="entry name" value="POZ domain"/>
    <property type="match status" value="1"/>
</dbReference>
<dbReference type="SUPFAM" id="SSF49599">
    <property type="entry name" value="TRAF domain-like"/>
    <property type="match status" value="1"/>
</dbReference>
<dbReference type="PROSITE" id="PS50097">
    <property type="entry name" value="BTB"/>
    <property type="match status" value="1"/>
</dbReference>
<protein>
    <recommendedName>
        <fullName>Trishanku</fullName>
    </recommendedName>
</protein>
<sequence>MEIEPVVRISFNGNNNQNNNNNNNNNTNNNSNNNNNNNNSSNINSTNKPSVKKPINQKMISNINNQKSPNPLNSSVDDNNNTNNNNNSNSNGTDEDIIKLARDLTNTFGILLGDSDQPSQFSDVIFKVGDRKFFASKIMLVARSEYFKAMFTGSMKESSIKEITLEGVDPDVFFTVLKYICIGILDLDYDHRMVSSIYQYCDLLGLQRGKELSLATMGKIAQMYLEKPDVESALFLWDSLNQSAIPVESVHPHLRAFVLQYASISLHCDAFYSISLTTLVQMLRNDGLRMEELDILDCVIDWCRENSQASIQQQQQQQQQQLQSANGASGKSHGKRSSSSHLKKHDGDGGSDGSCSSRCSSRRNSLSLKDHHRQHIGNGGGGGGHYNNNDCHSDTEETYSDIDDEEHRNGGGGVGDDFENDSEDGDDDDEDDDEDDDFTDDDDKDDSANDDYEYSTNKDDLDIIEDWDTTIDKNLLDEVLPLIRWENMNIGEAFERLDNLKIIPDKEISNLLRHILKSNRGESFSFLGYHYRRPRNNRKRPYPIEFLLGITQPFDSNVTNEIIPLNSFSSEFGQSTNQFLYRIKKDIKLPANLERFSFKDREFFVQLKEREKGQLAVYLAFGSKLTKPLAISVLASVIGFRFQDSIEFSFKKMFDEGFDSAWGWPKFISLDTLYKQDKYSHYSDSFCLLIELTSQWG</sequence>
<organism>
    <name type="scientific">Dictyostelium discoideum</name>
    <name type="common">Social amoeba</name>
    <dbReference type="NCBI Taxonomy" id="44689"/>
    <lineage>
        <taxon>Eukaryota</taxon>
        <taxon>Amoebozoa</taxon>
        <taxon>Evosea</taxon>
        <taxon>Eumycetozoa</taxon>
        <taxon>Dictyostelia</taxon>
        <taxon>Dictyosteliales</taxon>
        <taxon>Dictyosteliaceae</taxon>
        <taxon>Dictyostelium</taxon>
    </lineage>
</organism>
<name>TRIA_DICDI</name>
<feature type="chain" id="PRO_0000393271" description="Trishanku">
    <location>
        <begin position="1"/>
        <end position="697"/>
    </location>
</feature>
<feature type="domain" description="BTB" evidence="1">
    <location>
        <begin position="122"/>
        <end position="189"/>
    </location>
</feature>
<feature type="region of interest" description="Disordered" evidence="2">
    <location>
        <begin position="1"/>
        <end position="94"/>
    </location>
</feature>
<feature type="region of interest" description="Disordered" evidence="2">
    <location>
        <begin position="311"/>
        <end position="455"/>
    </location>
</feature>
<feature type="compositionally biased region" description="Low complexity" evidence="2">
    <location>
        <begin position="12"/>
        <end position="47"/>
    </location>
</feature>
<feature type="compositionally biased region" description="Polar residues" evidence="2">
    <location>
        <begin position="58"/>
        <end position="72"/>
    </location>
</feature>
<feature type="compositionally biased region" description="Low complexity" evidence="2">
    <location>
        <begin position="73"/>
        <end position="91"/>
    </location>
</feature>
<feature type="compositionally biased region" description="Low complexity" evidence="2">
    <location>
        <begin position="312"/>
        <end position="331"/>
    </location>
</feature>
<feature type="compositionally biased region" description="Basic residues" evidence="2">
    <location>
        <begin position="332"/>
        <end position="344"/>
    </location>
</feature>
<feature type="compositionally biased region" description="Low complexity" evidence="2">
    <location>
        <begin position="353"/>
        <end position="363"/>
    </location>
</feature>
<feature type="compositionally biased region" description="Acidic residues" evidence="2">
    <location>
        <begin position="416"/>
        <end position="453"/>
    </location>
</feature>
<comment type="function">
    <text evidence="3 4">Required for normal morphogenesis and cell-type stability.</text>
</comment>
<comment type="tissue specificity">
    <text evidence="3 4">Expressed strongly in presumptive spore (prespore or psp) cells during the late G2 phase of cell cycle. Present at a low level in vegetative cells.</text>
</comment>
<comment type="developmental stage">
    <text evidence="3">High expression during late G2-S phases. During development, expression level peaks at 12-15 hr post-starvation, and falls thereafter.</text>
</comment>
<comment type="induction">
    <text>Up-regulated by starvation.</text>
</comment>
<comment type="disruption phenotype">
    <text evidence="3 4">Mutant shows pleiotropic effects that include an inability of the spore mass to go all the way to the top. The upper cup, a tissue that derives from prestalk cells and anterior-like cells (ALCs), does not develop properly; it is unable to lift the spore mass to the top of the fruiting body, likely due to defective intercellular adhesion. The differentiated state becomes unstable; prespore cells transdifferentiate into prestalk and vice versa. Cells that find themselves in the wrong environment sort out to the zone that is appropriate to their new identity. The functional barrier that prevents intermixing between the prestalk and prespore zones becomes weakened. This permits prespore cells to move to the slug anterior and prestalk cells to the posterior. Cells that have moved to the wrong zone switch their state of differentiation in accord with their new location.</text>
</comment>